<dbReference type="EMBL" id="CU329672">
    <property type="protein sequence ID" value="CAB40019.1"/>
    <property type="molecule type" value="Genomic_DNA"/>
</dbReference>
<dbReference type="PIR" id="T41074">
    <property type="entry name" value="T41074"/>
</dbReference>
<dbReference type="RefSeq" id="NP_587988.1">
    <property type="nucleotide sequence ID" value="NM_001022979.2"/>
</dbReference>
<dbReference type="BioGRID" id="275794">
    <property type="interactions" value="11"/>
</dbReference>
<dbReference type="FunCoup" id="Q9Y7U1">
    <property type="interactions" value="87"/>
</dbReference>
<dbReference type="STRING" id="284812.Q9Y7U1"/>
<dbReference type="iPTMnet" id="Q9Y7U1"/>
<dbReference type="PaxDb" id="4896-SPCC16A11.01.1"/>
<dbReference type="EnsemblFungi" id="SPCC16A11.01.1">
    <property type="protein sequence ID" value="SPCC16A11.01.1:pep"/>
    <property type="gene ID" value="SPCC16A11.01"/>
</dbReference>
<dbReference type="GeneID" id="2539224"/>
<dbReference type="KEGG" id="spo:2539224"/>
<dbReference type="PomBase" id="SPCC16A11.01">
    <property type="gene designation" value="sfk1"/>
</dbReference>
<dbReference type="VEuPathDB" id="FungiDB:SPCC16A11.01"/>
<dbReference type="eggNOG" id="ENOG502RZQS">
    <property type="taxonomic scope" value="Eukaryota"/>
</dbReference>
<dbReference type="HOGENOM" id="CLU_087070_0_0_1"/>
<dbReference type="InParanoid" id="Q9Y7U1"/>
<dbReference type="PhylomeDB" id="Q9Y7U1"/>
<dbReference type="PRO" id="PR:Q9Y7U1"/>
<dbReference type="Proteomes" id="UP000002485">
    <property type="component" value="Chromosome III"/>
</dbReference>
<dbReference type="GO" id="GO:0005886">
    <property type="term" value="C:plasma membrane"/>
    <property type="evidence" value="ECO:0000318"/>
    <property type="project" value="GO_Central"/>
</dbReference>
<dbReference type="GO" id="GO:0006629">
    <property type="term" value="P:lipid metabolic process"/>
    <property type="evidence" value="ECO:0007669"/>
    <property type="project" value="UniProtKB-KW"/>
</dbReference>
<dbReference type="InterPro" id="IPR050911">
    <property type="entry name" value="DRAM/TMEM150_Autophagy_Mod"/>
</dbReference>
<dbReference type="InterPro" id="IPR019402">
    <property type="entry name" value="Frag1/DRAM/Sfk1"/>
</dbReference>
<dbReference type="PANTHER" id="PTHR21324:SF2">
    <property type="entry name" value="EG:22E5.9 PROTEIN"/>
    <property type="match status" value="1"/>
</dbReference>
<dbReference type="PANTHER" id="PTHR21324">
    <property type="entry name" value="FASTING-INDUCIBLE INTEGRAL MEMBRANE PROTEIN TM6P1-RELATED"/>
    <property type="match status" value="1"/>
</dbReference>
<dbReference type="Pfam" id="PF10277">
    <property type="entry name" value="Frag1"/>
    <property type="match status" value="1"/>
</dbReference>
<name>SFK1_SCHPO</name>
<feature type="chain" id="PRO_0000351442" description="Protein sfk1">
    <location>
        <begin position="1"/>
        <end position="328"/>
    </location>
</feature>
<feature type="topological domain" description="Cytoplasmic" evidence="2">
    <location>
        <begin position="1"/>
        <end position="19"/>
    </location>
</feature>
<feature type="transmembrane region" description="Helical" evidence="2">
    <location>
        <begin position="20"/>
        <end position="40"/>
    </location>
</feature>
<feature type="topological domain" description="Extracellular" evidence="2">
    <location>
        <begin position="41"/>
        <end position="69"/>
    </location>
</feature>
<feature type="transmembrane region" description="Helical" evidence="2">
    <location>
        <begin position="70"/>
        <end position="90"/>
    </location>
</feature>
<feature type="topological domain" description="Cytoplasmic" evidence="2">
    <location>
        <begin position="91"/>
        <end position="109"/>
    </location>
</feature>
<feature type="transmembrane region" description="Helical" evidence="2">
    <location>
        <begin position="110"/>
        <end position="130"/>
    </location>
</feature>
<feature type="topological domain" description="Extracellular" evidence="2">
    <location>
        <begin position="131"/>
        <end position="142"/>
    </location>
</feature>
<feature type="transmembrane region" description="Helical" evidence="2">
    <location>
        <begin position="143"/>
        <end position="163"/>
    </location>
</feature>
<feature type="topological domain" description="Cytoplasmic" evidence="2">
    <location>
        <begin position="164"/>
        <end position="178"/>
    </location>
</feature>
<feature type="transmembrane region" description="Helical" evidence="2">
    <location>
        <begin position="179"/>
        <end position="199"/>
    </location>
</feature>
<feature type="topological domain" description="Extracellular" evidence="2">
    <location>
        <begin position="200"/>
        <end position="213"/>
    </location>
</feature>
<feature type="transmembrane region" description="Helical" evidence="2">
    <location>
        <begin position="214"/>
        <end position="234"/>
    </location>
</feature>
<feature type="topological domain" description="Cytoplasmic" evidence="2">
    <location>
        <begin position="235"/>
        <end position="328"/>
    </location>
</feature>
<reference key="1">
    <citation type="journal article" date="2002" name="Nature">
        <title>The genome sequence of Schizosaccharomyces pombe.</title>
        <authorList>
            <person name="Wood V."/>
            <person name="Gwilliam R."/>
            <person name="Rajandream M.A."/>
            <person name="Lyne M.H."/>
            <person name="Lyne R."/>
            <person name="Stewart A."/>
            <person name="Sgouros J.G."/>
            <person name="Peat N."/>
            <person name="Hayles J."/>
            <person name="Baker S.G."/>
            <person name="Basham D."/>
            <person name="Bowman S."/>
            <person name="Brooks K."/>
            <person name="Brown D."/>
            <person name="Brown S."/>
            <person name="Chillingworth T."/>
            <person name="Churcher C.M."/>
            <person name="Collins M."/>
            <person name="Connor R."/>
            <person name="Cronin A."/>
            <person name="Davis P."/>
            <person name="Feltwell T."/>
            <person name="Fraser A."/>
            <person name="Gentles S."/>
            <person name="Goble A."/>
            <person name="Hamlin N."/>
            <person name="Harris D.E."/>
            <person name="Hidalgo J."/>
            <person name="Hodgson G."/>
            <person name="Holroyd S."/>
            <person name="Hornsby T."/>
            <person name="Howarth S."/>
            <person name="Huckle E.J."/>
            <person name="Hunt S."/>
            <person name="Jagels K."/>
            <person name="James K.D."/>
            <person name="Jones L."/>
            <person name="Jones M."/>
            <person name="Leather S."/>
            <person name="McDonald S."/>
            <person name="McLean J."/>
            <person name="Mooney P."/>
            <person name="Moule S."/>
            <person name="Mungall K.L."/>
            <person name="Murphy L.D."/>
            <person name="Niblett D."/>
            <person name="Odell C."/>
            <person name="Oliver K."/>
            <person name="O'Neil S."/>
            <person name="Pearson D."/>
            <person name="Quail M.A."/>
            <person name="Rabbinowitsch E."/>
            <person name="Rutherford K.M."/>
            <person name="Rutter S."/>
            <person name="Saunders D."/>
            <person name="Seeger K."/>
            <person name="Sharp S."/>
            <person name="Skelton J."/>
            <person name="Simmonds M.N."/>
            <person name="Squares R."/>
            <person name="Squares S."/>
            <person name="Stevens K."/>
            <person name="Taylor K."/>
            <person name="Taylor R.G."/>
            <person name="Tivey A."/>
            <person name="Walsh S.V."/>
            <person name="Warren T."/>
            <person name="Whitehead S."/>
            <person name="Woodward J.R."/>
            <person name="Volckaert G."/>
            <person name="Aert R."/>
            <person name="Robben J."/>
            <person name="Grymonprez B."/>
            <person name="Weltjens I."/>
            <person name="Vanstreels E."/>
            <person name="Rieger M."/>
            <person name="Schaefer M."/>
            <person name="Mueller-Auer S."/>
            <person name="Gabel C."/>
            <person name="Fuchs M."/>
            <person name="Duesterhoeft A."/>
            <person name="Fritzc C."/>
            <person name="Holzer E."/>
            <person name="Moestl D."/>
            <person name="Hilbert H."/>
            <person name="Borzym K."/>
            <person name="Langer I."/>
            <person name="Beck A."/>
            <person name="Lehrach H."/>
            <person name="Reinhardt R."/>
            <person name="Pohl T.M."/>
            <person name="Eger P."/>
            <person name="Zimmermann W."/>
            <person name="Wedler H."/>
            <person name="Wambutt R."/>
            <person name="Purnelle B."/>
            <person name="Goffeau A."/>
            <person name="Cadieu E."/>
            <person name="Dreano S."/>
            <person name="Gloux S."/>
            <person name="Lelaure V."/>
            <person name="Mottier S."/>
            <person name="Galibert F."/>
            <person name="Aves S.J."/>
            <person name="Xiang Z."/>
            <person name="Hunt C."/>
            <person name="Moore K."/>
            <person name="Hurst S.M."/>
            <person name="Lucas M."/>
            <person name="Rochet M."/>
            <person name="Gaillardin C."/>
            <person name="Tallada V.A."/>
            <person name="Garzon A."/>
            <person name="Thode G."/>
            <person name="Daga R.R."/>
            <person name="Cruzado L."/>
            <person name="Jimenez J."/>
            <person name="Sanchez M."/>
            <person name="del Rey F."/>
            <person name="Benito J."/>
            <person name="Dominguez A."/>
            <person name="Revuelta J.L."/>
            <person name="Moreno S."/>
            <person name="Armstrong J."/>
            <person name="Forsburg S.L."/>
            <person name="Cerutti L."/>
            <person name="Lowe T."/>
            <person name="McCombie W.R."/>
            <person name="Paulsen I."/>
            <person name="Potashkin J."/>
            <person name="Shpakovski G.V."/>
            <person name="Ussery D."/>
            <person name="Barrell B.G."/>
            <person name="Nurse P."/>
        </authorList>
    </citation>
    <scope>NUCLEOTIDE SEQUENCE [LARGE SCALE GENOMIC DNA]</scope>
    <source>
        <strain>972 / ATCC 24843</strain>
    </source>
</reference>
<sequence>MDNDYTTSTTTSRRPRFWGFFFILFPLVSFLMWTIGLIVLLGLWSTQDKWHTPSEPDPVYLSDMGAYTKGFFIPMCVITGVFYFLTFIMIRLARQWGWIYPTGRKVETYLGWFAALTGAAAASCLISLSIRDDVHHDNVHWKFTAAFVVLAFVSAASNIFEWLSATRYYPQSSLLRVSFIFKFVIIVVGIICAIAFGGLHHNYRGRSARFEWVVCFLWSIYICLLCLDLAPALFYDSLASAPDLEKGAYATSVPESYVAPMEPPAAVLPDGEERYATPDLVPDTTAQYPYASATEPGVSNIPETRPERPVVYNMDVSQTTTTTRPVLA</sequence>
<comment type="function">
    <text evidence="1">May control the production of phosphatidylinositol 4-phosphate (PI4P).</text>
</comment>
<comment type="subcellular location">
    <subcellularLocation>
        <location evidence="1">Cell membrane</location>
        <topology evidence="1">Multi-pass membrane protein</topology>
    </subcellularLocation>
</comment>
<comment type="similarity">
    <text evidence="3">Belongs to the SFK1 family.</text>
</comment>
<protein>
    <recommendedName>
        <fullName>Protein sfk1</fullName>
    </recommendedName>
</protein>
<accession>Q9Y7U1</accession>
<organism>
    <name type="scientific">Schizosaccharomyces pombe (strain 972 / ATCC 24843)</name>
    <name type="common">Fission yeast</name>
    <dbReference type="NCBI Taxonomy" id="284812"/>
    <lineage>
        <taxon>Eukaryota</taxon>
        <taxon>Fungi</taxon>
        <taxon>Dikarya</taxon>
        <taxon>Ascomycota</taxon>
        <taxon>Taphrinomycotina</taxon>
        <taxon>Schizosaccharomycetes</taxon>
        <taxon>Schizosaccharomycetales</taxon>
        <taxon>Schizosaccharomycetaceae</taxon>
        <taxon>Schizosaccharomyces</taxon>
    </lineage>
</organism>
<proteinExistence type="inferred from homology"/>
<gene>
    <name type="primary">sfk1</name>
    <name type="ORF">SPCC16A11.01</name>
    <name type="ORF">SPCC63.15</name>
</gene>
<keyword id="KW-1003">Cell membrane</keyword>
<keyword id="KW-0444">Lipid biosynthesis</keyword>
<keyword id="KW-0443">Lipid metabolism</keyword>
<keyword id="KW-0472">Membrane</keyword>
<keyword id="KW-1185">Reference proteome</keyword>
<keyword id="KW-0812">Transmembrane</keyword>
<keyword id="KW-1133">Transmembrane helix</keyword>
<evidence type="ECO:0000250" key="1"/>
<evidence type="ECO:0000255" key="2"/>
<evidence type="ECO:0000305" key="3"/>